<accession>Q9PHL7</accession>
<accession>Q0PAL8</accession>
<organism>
    <name type="scientific">Campylobacter jejuni subsp. jejuni serotype O:2 (strain ATCC 700819 / NCTC 11168)</name>
    <dbReference type="NCBI Taxonomy" id="192222"/>
    <lineage>
        <taxon>Bacteria</taxon>
        <taxon>Pseudomonadati</taxon>
        <taxon>Campylobacterota</taxon>
        <taxon>Epsilonproteobacteria</taxon>
        <taxon>Campylobacterales</taxon>
        <taxon>Campylobacteraceae</taxon>
        <taxon>Campylobacter</taxon>
    </lineage>
</organism>
<comment type="function">
    <text evidence="1">Necessary for normal cell division and for the maintenance of normal septation.</text>
</comment>
<comment type="cofactor">
    <cofactor evidence="1">
        <name>Mg(2+)</name>
        <dbReference type="ChEBI" id="CHEBI:18420"/>
    </cofactor>
</comment>
<comment type="similarity">
    <text evidence="1">Belongs to the TRAFAC class TrmE-Era-EngA-EngB-Septin-like GTPase superfamily. EngB GTPase family.</text>
</comment>
<keyword id="KW-0131">Cell cycle</keyword>
<keyword id="KW-0132">Cell division</keyword>
<keyword id="KW-0342">GTP-binding</keyword>
<keyword id="KW-0460">Magnesium</keyword>
<keyword id="KW-0479">Metal-binding</keyword>
<keyword id="KW-0547">Nucleotide-binding</keyword>
<keyword id="KW-1185">Reference proteome</keyword>
<keyword id="KW-0717">Septation</keyword>
<feature type="chain" id="PRO_0000157742" description="Probable GTP-binding protein EngB">
    <location>
        <begin position="1"/>
        <end position="198"/>
    </location>
</feature>
<feature type="domain" description="EngB-type G" evidence="1">
    <location>
        <begin position="21"/>
        <end position="195"/>
    </location>
</feature>
<feature type="binding site" evidence="1">
    <location>
        <begin position="29"/>
        <end position="36"/>
    </location>
    <ligand>
        <name>GTP</name>
        <dbReference type="ChEBI" id="CHEBI:37565"/>
    </ligand>
</feature>
<feature type="binding site" evidence="1">
    <location>
        <position position="36"/>
    </location>
    <ligand>
        <name>Mg(2+)</name>
        <dbReference type="ChEBI" id="CHEBI:18420"/>
    </ligand>
</feature>
<feature type="binding site" evidence="1">
    <location>
        <begin position="56"/>
        <end position="60"/>
    </location>
    <ligand>
        <name>GTP</name>
        <dbReference type="ChEBI" id="CHEBI:37565"/>
    </ligand>
</feature>
<feature type="binding site" evidence="1">
    <location>
        <position position="58"/>
    </location>
    <ligand>
        <name>Mg(2+)</name>
        <dbReference type="ChEBI" id="CHEBI:18420"/>
    </ligand>
</feature>
<feature type="binding site" evidence="1">
    <location>
        <begin position="81"/>
        <end position="84"/>
    </location>
    <ligand>
        <name>GTP</name>
        <dbReference type="ChEBI" id="CHEBI:37565"/>
    </ligand>
</feature>
<feature type="binding site" evidence="1">
    <location>
        <begin position="151"/>
        <end position="154"/>
    </location>
    <ligand>
        <name>GTP</name>
        <dbReference type="ChEBI" id="CHEBI:37565"/>
    </ligand>
</feature>
<feature type="binding site" evidence="1">
    <location>
        <begin position="174"/>
        <end position="176"/>
    </location>
    <ligand>
        <name>GTP</name>
        <dbReference type="ChEBI" id="CHEBI:37565"/>
    </ligand>
</feature>
<dbReference type="EMBL" id="AL111168">
    <property type="protein sequence ID" value="CAL34795.1"/>
    <property type="molecule type" value="Genomic_DNA"/>
</dbReference>
<dbReference type="PIR" id="A81414">
    <property type="entry name" value="A81414"/>
</dbReference>
<dbReference type="RefSeq" id="YP_002344079.1">
    <property type="nucleotide sequence ID" value="NC_002163.1"/>
</dbReference>
<dbReference type="SMR" id="Q9PHL7"/>
<dbReference type="STRING" id="192222.Cj0650"/>
<dbReference type="PaxDb" id="192222-Cj0650"/>
<dbReference type="EnsemblBacteria" id="CAL34795">
    <property type="protein sequence ID" value="CAL34795"/>
    <property type="gene ID" value="Cj0650"/>
</dbReference>
<dbReference type="GeneID" id="904977"/>
<dbReference type="KEGG" id="cje:Cj0650"/>
<dbReference type="PATRIC" id="fig|192222.6.peg.642"/>
<dbReference type="eggNOG" id="COG0218">
    <property type="taxonomic scope" value="Bacteria"/>
</dbReference>
<dbReference type="HOGENOM" id="CLU_033732_3_2_7"/>
<dbReference type="OrthoDB" id="9804921at2"/>
<dbReference type="Proteomes" id="UP000000799">
    <property type="component" value="Chromosome"/>
</dbReference>
<dbReference type="GO" id="GO:0005829">
    <property type="term" value="C:cytosol"/>
    <property type="evidence" value="ECO:0007669"/>
    <property type="project" value="TreeGrafter"/>
</dbReference>
<dbReference type="GO" id="GO:0005525">
    <property type="term" value="F:GTP binding"/>
    <property type="evidence" value="ECO:0007669"/>
    <property type="project" value="UniProtKB-UniRule"/>
</dbReference>
<dbReference type="GO" id="GO:0046872">
    <property type="term" value="F:metal ion binding"/>
    <property type="evidence" value="ECO:0007669"/>
    <property type="project" value="UniProtKB-KW"/>
</dbReference>
<dbReference type="GO" id="GO:0000917">
    <property type="term" value="P:division septum assembly"/>
    <property type="evidence" value="ECO:0007669"/>
    <property type="project" value="UniProtKB-KW"/>
</dbReference>
<dbReference type="CDD" id="cd01876">
    <property type="entry name" value="YihA_EngB"/>
    <property type="match status" value="1"/>
</dbReference>
<dbReference type="Gene3D" id="3.40.50.300">
    <property type="entry name" value="P-loop containing nucleotide triphosphate hydrolases"/>
    <property type="match status" value="1"/>
</dbReference>
<dbReference type="HAMAP" id="MF_00321">
    <property type="entry name" value="GTPase_EngB"/>
    <property type="match status" value="1"/>
</dbReference>
<dbReference type="InterPro" id="IPR030393">
    <property type="entry name" value="G_ENGB_dom"/>
</dbReference>
<dbReference type="InterPro" id="IPR006073">
    <property type="entry name" value="GTP-bd"/>
</dbReference>
<dbReference type="InterPro" id="IPR019987">
    <property type="entry name" value="GTP-bd_ribosome_bio_YsxC"/>
</dbReference>
<dbReference type="InterPro" id="IPR027417">
    <property type="entry name" value="P-loop_NTPase"/>
</dbReference>
<dbReference type="InterPro" id="IPR005225">
    <property type="entry name" value="Small_GTP-bd"/>
</dbReference>
<dbReference type="NCBIfam" id="TIGR03598">
    <property type="entry name" value="GTPase_YsxC"/>
    <property type="match status" value="1"/>
</dbReference>
<dbReference type="NCBIfam" id="TIGR00231">
    <property type="entry name" value="small_GTP"/>
    <property type="match status" value="1"/>
</dbReference>
<dbReference type="PANTHER" id="PTHR11649:SF13">
    <property type="entry name" value="ENGB-TYPE G DOMAIN-CONTAINING PROTEIN"/>
    <property type="match status" value="1"/>
</dbReference>
<dbReference type="PANTHER" id="PTHR11649">
    <property type="entry name" value="MSS1/TRME-RELATED GTP-BINDING PROTEIN"/>
    <property type="match status" value="1"/>
</dbReference>
<dbReference type="Pfam" id="PF01926">
    <property type="entry name" value="MMR_HSR1"/>
    <property type="match status" value="1"/>
</dbReference>
<dbReference type="SUPFAM" id="SSF52540">
    <property type="entry name" value="P-loop containing nucleoside triphosphate hydrolases"/>
    <property type="match status" value="1"/>
</dbReference>
<dbReference type="PROSITE" id="PS51706">
    <property type="entry name" value="G_ENGB"/>
    <property type="match status" value="1"/>
</dbReference>
<reference key="1">
    <citation type="journal article" date="2000" name="Nature">
        <title>The genome sequence of the food-borne pathogen Campylobacter jejuni reveals hypervariable sequences.</title>
        <authorList>
            <person name="Parkhill J."/>
            <person name="Wren B.W."/>
            <person name="Mungall K.L."/>
            <person name="Ketley J.M."/>
            <person name="Churcher C.M."/>
            <person name="Basham D."/>
            <person name="Chillingworth T."/>
            <person name="Davies R.M."/>
            <person name="Feltwell T."/>
            <person name="Holroyd S."/>
            <person name="Jagels K."/>
            <person name="Karlyshev A.V."/>
            <person name="Moule S."/>
            <person name="Pallen M.J."/>
            <person name="Penn C.W."/>
            <person name="Quail M.A."/>
            <person name="Rajandream M.A."/>
            <person name="Rutherford K.M."/>
            <person name="van Vliet A.H.M."/>
            <person name="Whitehead S."/>
            <person name="Barrell B.G."/>
        </authorList>
    </citation>
    <scope>NUCLEOTIDE SEQUENCE [LARGE SCALE GENOMIC DNA]</scope>
    <source>
        <strain>ATCC 700819 / NCTC 11168</strain>
    </source>
</reference>
<sequence>MIISAKFITSLVKFDENLSSNFSEVAFLGRSNVGKSSLINSLCKQKNLAKSSATPGKTQLINFFEVICRRNEEKFNINFIDLPGFGYAKVSKNLKEIWNQNLDEFLKLRTSIKLFIHLIDSRHTHLEIDVNLNDYLKRFLRPDQKILKVFTKCDKLNQSEKAKLKNEFKDSILVSNLNKFGLDSLEDIIINQTLGLDK</sequence>
<name>ENGB_CAMJE</name>
<evidence type="ECO:0000255" key="1">
    <source>
        <dbReference type="HAMAP-Rule" id="MF_00321"/>
    </source>
</evidence>
<gene>
    <name evidence="1" type="primary">engB</name>
    <name type="ordered locus">Cj0650</name>
</gene>
<protein>
    <recommendedName>
        <fullName evidence="1">Probable GTP-binding protein EngB</fullName>
    </recommendedName>
</protein>
<proteinExistence type="inferred from homology"/>